<keyword id="KW-0040">ANK repeat</keyword>
<keyword id="KW-0472">Membrane</keyword>
<keyword id="KW-1185">Reference proteome</keyword>
<keyword id="KW-0677">Repeat</keyword>
<keyword id="KW-0812">Transmembrane</keyword>
<keyword id="KW-1133">Transmembrane helix</keyword>
<proteinExistence type="evidence at transcript level"/>
<evidence type="ECO:0000255" key="1"/>
<evidence type="ECO:0000256" key="2">
    <source>
        <dbReference type="SAM" id="MobiDB-lite"/>
    </source>
</evidence>
<evidence type="ECO:0000305" key="3"/>
<name>ANKAR_MOUSE</name>
<dbReference type="EMBL" id="AK030065">
    <property type="protein sequence ID" value="BAC26765.1"/>
    <property type="molecule type" value="mRNA"/>
</dbReference>
<dbReference type="EMBL" id="BC132415">
    <property type="protein sequence ID" value="AAI32416.1"/>
    <property type="molecule type" value="mRNA"/>
</dbReference>
<dbReference type="CCDS" id="CCDS15035.1"/>
<dbReference type="RefSeq" id="NP_795954.2">
    <property type="nucleotide sequence ID" value="NM_176980.5"/>
</dbReference>
<dbReference type="SMR" id="A2RT91"/>
<dbReference type="FunCoup" id="A2RT91">
    <property type="interactions" value="78"/>
</dbReference>
<dbReference type="iPTMnet" id="A2RT91"/>
<dbReference type="PhosphoSitePlus" id="A2RT91"/>
<dbReference type="PaxDb" id="10090-ENSMUSP00000054056"/>
<dbReference type="ProteomicsDB" id="282106"/>
<dbReference type="Antibodypedia" id="52164">
    <property type="antibodies" value="7 antibodies from 6 providers"/>
</dbReference>
<dbReference type="DNASU" id="319695"/>
<dbReference type="Ensembl" id="ENSMUST00000053499.6">
    <property type="protein sequence ID" value="ENSMUSP00000054056.5"/>
    <property type="gene ID" value="ENSMUSG00000039342.6"/>
</dbReference>
<dbReference type="GeneID" id="319695"/>
<dbReference type="KEGG" id="mmu:319695"/>
<dbReference type="UCSC" id="uc007bkt.2">
    <property type="organism name" value="mouse"/>
</dbReference>
<dbReference type="AGR" id="MGI:2442559"/>
<dbReference type="CTD" id="150709"/>
<dbReference type="MGI" id="MGI:2442559">
    <property type="gene designation" value="Ankar"/>
</dbReference>
<dbReference type="VEuPathDB" id="HostDB:ENSMUSG00000039342"/>
<dbReference type="eggNOG" id="KOG0507">
    <property type="taxonomic scope" value="Eukaryota"/>
</dbReference>
<dbReference type="GeneTree" id="ENSGT00680000100065"/>
<dbReference type="HOGENOM" id="CLU_006481_0_0_1"/>
<dbReference type="InParanoid" id="A2RT91"/>
<dbReference type="OMA" id="FMGLFKT"/>
<dbReference type="OrthoDB" id="1683831at2759"/>
<dbReference type="PhylomeDB" id="A2RT91"/>
<dbReference type="TreeFam" id="TF324155"/>
<dbReference type="BioGRID-ORCS" id="319695">
    <property type="hits" value="0 hits in 77 CRISPR screens"/>
</dbReference>
<dbReference type="ChiTaRS" id="Ankar">
    <property type="organism name" value="mouse"/>
</dbReference>
<dbReference type="PRO" id="PR:A2RT91"/>
<dbReference type="Proteomes" id="UP000000589">
    <property type="component" value="Chromosome 1"/>
</dbReference>
<dbReference type="RNAct" id="A2RT91">
    <property type="molecule type" value="protein"/>
</dbReference>
<dbReference type="Bgee" id="ENSMUSG00000039342">
    <property type="expression patterns" value="Expressed in spermatocyte and 7 other cell types or tissues"/>
</dbReference>
<dbReference type="ExpressionAtlas" id="A2RT91">
    <property type="expression patterns" value="baseline and differential"/>
</dbReference>
<dbReference type="GO" id="GO:0016020">
    <property type="term" value="C:membrane"/>
    <property type="evidence" value="ECO:0007669"/>
    <property type="project" value="UniProtKB-SubCell"/>
</dbReference>
<dbReference type="Gene3D" id="1.25.40.20">
    <property type="entry name" value="Ankyrin repeat-containing domain"/>
    <property type="match status" value="1"/>
</dbReference>
<dbReference type="Gene3D" id="1.25.10.10">
    <property type="entry name" value="Leucine-rich Repeat Variant"/>
    <property type="match status" value="3"/>
</dbReference>
<dbReference type="InterPro" id="IPR043379">
    <property type="entry name" value="ANKAR"/>
</dbReference>
<dbReference type="InterPro" id="IPR002110">
    <property type="entry name" value="Ankyrin_rpt"/>
</dbReference>
<dbReference type="InterPro" id="IPR036770">
    <property type="entry name" value="Ankyrin_rpt-contain_sf"/>
</dbReference>
<dbReference type="InterPro" id="IPR011989">
    <property type="entry name" value="ARM-like"/>
</dbReference>
<dbReference type="InterPro" id="IPR016024">
    <property type="entry name" value="ARM-type_fold"/>
</dbReference>
<dbReference type="InterPro" id="IPR000225">
    <property type="entry name" value="Armadillo"/>
</dbReference>
<dbReference type="PANTHER" id="PTHR46464">
    <property type="entry name" value="ANK_REP_REGION DOMAIN-CONTAINING PROTEIN"/>
    <property type="match status" value="1"/>
</dbReference>
<dbReference type="PANTHER" id="PTHR46464:SF1">
    <property type="entry name" value="ANKYRIN AND ARMADILLO REPEAT-CONTAINING PROTEIN"/>
    <property type="match status" value="1"/>
</dbReference>
<dbReference type="Pfam" id="PF00514">
    <property type="entry name" value="Arm"/>
    <property type="match status" value="1"/>
</dbReference>
<dbReference type="SMART" id="SM00248">
    <property type="entry name" value="ANK"/>
    <property type="match status" value="5"/>
</dbReference>
<dbReference type="SMART" id="SM00185">
    <property type="entry name" value="ARM"/>
    <property type="match status" value="8"/>
</dbReference>
<dbReference type="SUPFAM" id="SSF48403">
    <property type="entry name" value="Ankyrin repeat"/>
    <property type="match status" value="1"/>
</dbReference>
<dbReference type="SUPFAM" id="SSF48371">
    <property type="entry name" value="ARM repeat"/>
    <property type="match status" value="2"/>
</dbReference>
<dbReference type="PROSITE" id="PS50297">
    <property type="entry name" value="ANK_REP_REGION"/>
    <property type="match status" value="1"/>
</dbReference>
<dbReference type="PROSITE" id="PS50088">
    <property type="entry name" value="ANK_REPEAT"/>
    <property type="match status" value="2"/>
</dbReference>
<dbReference type="PROSITE" id="PS50176">
    <property type="entry name" value="ARM_REPEAT"/>
    <property type="match status" value="1"/>
</dbReference>
<reference key="1">
    <citation type="journal article" date="2005" name="Science">
        <title>The transcriptional landscape of the mammalian genome.</title>
        <authorList>
            <person name="Carninci P."/>
            <person name="Kasukawa T."/>
            <person name="Katayama S."/>
            <person name="Gough J."/>
            <person name="Frith M.C."/>
            <person name="Maeda N."/>
            <person name="Oyama R."/>
            <person name="Ravasi T."/>
            <person name="Lenhard B."/>
            <person name="Wells C."/>
            <person name="Kodzius R."/>
            <person name="Shimokawa K."/>
            <person name="Bajic V.B."/>
            <person name="Brenner S.E."/>
            <person name="Batalov S."/>
            <person name="Forrest A.R."/>
            <person name="Zavolan M."/>
            <person name="Davis M.J."/>
            <person name="Wilming L.G."/>
            <person name="Aidinis V."/>
            <person name="Allen J.E."/>
            <person name="Ambesi-Impiombato A."/>
            <person name="Apweiler R."/>
            <person name="Aturaliya R.N."/>
            <person name="Bailey T.L."/>
            <person name="Bansal M."/>
            <person name="Baxter L."/>
            <person name="Beisel K.W."/>
            <person name="Bersano T."/>
            <person name="Bono H."/>
            <person name="Chalk A.M."/>
            <person name="Chiu K.P."/>
            <person name="Choudhary V."/>
            <person name="Christoffels A."/>
            <person name="Clutterbuck D.R."/>
            <person name="Crowe M.L."/>
            <person name="Dalla E."/>
            <person name="Dalrymple B.P."/>
            <person name="de Bono B."/>
            <person name="Della Gatta G."/>
            <person name="di Bernardo D."/>
            <person name="Down T."/>
            <person name="Engstrom P."/>
            <person name="Fagiolini M."/>
            <person name="Faulkner G."/>
            <person name="Fletcher C.F."/>
            <person name="Fukushima T."/>
            <person name="Furuno M."/>
            <person name="Futaki S."/>
            <person name="Gariboldi M."/>
            <person name="Georgii-Hemming P."/>
            <person name="Gingeras T.R."/>
            <person name="Gojobori T."/>
            <person name="Green R.E."/>
            <person name="Gustincich S."/>
            <person name="Harbers M."/>
            <person name="Hayashi Y."/>
            <person name="Hensch T.K."/>
            <person name="Hirokawa N."/>
            <person name="Hill D."/>
            <person name="Huminiecki L."/>
            <person name="Iacono M."/>
            <person name="Ikeo K."/>
            <person name="Iwama A."/>
            <person name="Ishikawa T."/>
            <person name="Jakt M."/>
            <person name="Kanapin A."/>
            <person name="Katoh M."/>
            <person name="Kawasawa Y."/>
            <person name="Kelso J."/>
            <person name="Kitamura H."/>
            <person name="Kitano H."/>
            <person name="Kollias G."/>
            <person name="Krishnan S.P."/>
            <person name="Kruger A."/>
            <person name="Kummerfeld S.K."/>
            <person name="Kurochkin I.V."/>
            <person name="Lareau L.F."/>
            <person name="Lazarevic D."/>
            <person name="Lipovich L."/>
            <person name="Liu J."/>
            <person name="Liuni S."/>
            <person name="McWilliam S."/>
            <person name="Madan Babu M."/>
            <person name="Madera M."/>
            <person name="Marchionni L."/>
            <person name="Matsuda H."/>
            <person name="Matsuzawa S."/>
            <person name="Miki H."/>
            <person name="Mignone F."/>
            <person name="Miyake S."/>
            <person name="Morris K."/>
            <person name="Mottagui-Tabar S."/>
            <person name="Mulder N."/>
            <person name="Nakano N."/>
            <person name="Nakauchi H."/>
            <person name="Ng P."/>
            <person name="Nilsson R."/>
            <person name="Nishiguchi S."/>
            <person name="Nishikawa S."/>
            <person name="Nori F."/>
            <person name="Ohara O."/>
            <person name="Okazaki Y."/>
            <person name="Orlando V."/>
            <person name="Pang K.C."/>
            <person name="Pavan W.J."/>
            <person name="Pavesi G."/>
            <person name="Pesole G."/>
            <person name="Petrovsky N."/>
            <person name="Piazza S."/>
            <person name="Reed J."/>
            <person name="Reid J.F."/>
            <person name="Ring B.Z."/>
            <person name="Ringwald M."/>
            <person name="Rost B."/>
            <person name="Ruan Y."/>
            <person name="Salzberg S.L."/>
            <person name="Sandelin A."/>
            <person name="Schneider C."/>
            <person name="Schoenbach C."/>
            <person name="Sekiguchi K."/>
            <person name="Semple C.A."/>
            <person name="Seno S."/>
            <person name="Sessa L."/>
            <person name="Sheng Y."/>
            <person name="Shibata Y."/>
            <person name="Shimada H."/>
            <person name="Shimada K."/>
            <person name="Silva D."/>
            <person name="Sinclair B."/>
            <person name="Sperling S."/>
            <person name="Stupka E."/>
            <person name="Sugiura K."/>
            <person name="Sultana R."/>
            <person name="Takenaka Y."/>
            <person name="Taki K."/>
            <person name="Tammoja K."/>
            <person name="Tan S.L."/>
            <person name="Tang S."/>
            <person name="Taylor M.S."/>
            <person name="Tegner J."/>
            <person name="Teichmann S.A."/>
            <person name="Ueda H.R."/>
            <person name="van Nimwegen E."/>
            <person name="Verardo R."/>
            <person name="Wei C.L."/>
            <person name="Yagi K."/>
            <person name="Yamanishi H."/>
            <person name="Zabarovsky E."/>
            <person name="Zhu S."/>
            <person name="Zimmer A."/>
            <person name="Hide W."/>
            <person name="Bult C."/>
            <person name="Grimmond S.M."/>
            <person name="Teasdale R.D."/>
            <person name="Liu E.T."/>
            <person name="Brusic V."/>
            <person name="Quackenbush J."/>
            <person name="Wahlestedt C."/>
            <person name="Mattick J.S."/>
            <person name="Hume D.A."/>
            <person name="Kai C."/>
            <person name="Sasaki D."/>
            <person name="Tomaru Y."/>
            <person name="Fukuda S."/>
            <person name="Kanamori-Katayama M."/>
            <person name="Suzuki M."/>
            <person name="Aoki J."/>
            <person name="Arakawa T."/>
            <person name="Iida J."/>
            <person name="Imamura K."/>
            <person name="Itoh M."/>
            <person name="Kato T."/>
            <person name="Kawaji H."/>
            <person name="Kawagashira N."/>
            <person name="Kawashima T."/>
            <person name="Kojima M."/>
            <person name="Kondo S."/>
            <person name="Konno H."/>
            <person name="Nakano K."/>
            <person name="Ninomiya N."/>
            <person name="Nishio T."/>
            <person name="Okada M."/>
            <person name="Plessy C."/>
            <person name="Shibata K."/>
            <person name="Shiraki T."/>
            <person name="Suzuki S."/>
            <person name="Tagami M."/>
            <person name="Waki K."/>
            <person name="Watahiki A."/>
            <person name="Okamura-Oho Y."/>
            <person name="Suzuki H."/>
            <person name="Kawai J."/>
            <person name="Hayashizaki Y."/>
        </authorList>
    </citation>
    <scope>NUCLEOTIDE SEQUENCE [LARGE SCALE MRNA]</scope>
    <source>
        <strain>C57BL/6J</strain>
        <tissue>Testis</tissue>
    </source>
</reference>
<reference key="2">
    <citation type="journal article" date="2004" name="Genome Res.">
        <title>The status, quality, and expansion of the NIH full-length cDNA project: the Mammalian Gene Collection (MGC).</title>
        <authorList>
            <consortium name="The MGC Project Team"/>
        </authorList>
    </citation>
    <scope>NUCLEOTIDE SEQUENCE [LARGE SCALE MRNA]</scope>
    <source>
        <tissue>Brain</tissue>
    </source>
</reference>
<protein>
    <recommendedName>
        <fullName>Ankyrin and armadillo repeat-containing protein</fullName>
    </recommendedName>
</protein>
<gene>
    <name type="primary">Ankar</name>
</gene>
<accession>A2RT91</accession>
<accession>Q8C0Q1</accession>
<feature type="chain" id="PRO_0000286807" description="Ankyrin and armadillo repeat-containing protein">
    <location>
        <begin position="1"/>
        <end position="1465"/>
    </location>
</feature>
<feature type="transmembrane region" description="Helical" evidence="1">
    <location>
        <begin position="313"/>
        <end position="329"/>
    </location>
</feature>
<feature type="repeat" description="ANK 1">
    <location>
        <begin position="532"/>
        <end position="561"/>
    </location>
</feature>
<feature type="repeat" description="ANK 2">
    <location>
        <begin position="582"/>
        <end position="611"/>
    </location>
</feature>
<feature type="repeat" description="ANK 3">
    <location>
        <begin position="615"/>
        <end position="644"/>
    </location>
</feature>
<feature type="repeat" description="ANK 4">
    <location>
        <begin position="651"/>
        <end position="680"/>
    </location>
</feature>
<feature type="repeat" description="ANK 5">
    <location>
        <begin position="684"/>
        <end position="714"/>
    </location>
</feature>
<feature type="repeat" description="ARM 1">
    <location>
        <begin position="745"/>
        <end position="784"/>
    </location>
</feature>
<feature type="repeat" description="ARM 2">
    <location>
        <begin position="786"/>
        <end position="825"/>
    </location>
</feature>
<feature type="repeat" description="ARM 3">
    <location>
        <begin position="827"/>
        <end position="865"/>
    </location>
</feature>
<feature type="repeat" description="ARM 4">
    <location>
        <begin position="868"/>
        <end position="907"/>
    </location>
</feature>
<feature type="repeat" description="ARM 5">
    <location>
        <begin position="910"/>
        <end position="949"/>
    </location>
</feature>
<feature type="repeat" description="ARM 6">
    <location>
        <begin position="1085"/>
        <end position="1125"/>
    </location>
</feature>
<feature type="region of interest" description="Disordered" evidence="2">
    <location>
        <begin position="1431"/>
        <end position="1465"/>
    </location>
</feature>
<feature type="sequence conflict" description="In Ref. 1; BAC26765." evidence="3" ref="1">
    <original>G</original>
    <variation>D</variation>
    <location>
        <position position="533"/>
    </location>
</feature>
<organism>
    <name type="scientific">Mus musculus</name>
    <name type="common">Mouse</name>
    <dbReference type="NCBI Taxonomy" id="10090"/>
    <lineage>
        <taxon>Eukaryota</taxon>
        <taxon>Metazoa</taxon>
        <taxon>Chordata</taxon>
        <taxon>Craniata</taxon>
        <taxon>Vertebrata</taxon>
        <taxon>Euteleostomi</taxon>
        <taxon>Mammalia</taxon>
        <taxon>Eutheria</taxon>
        <taxon>Euarchontoglires</taxon>
        <taxon>Glires</taxon>
        <taxon>Rodentia</taxon>
        <taxon>Myomorpha</taxon>
        <taxon>Muroidea</taxon>
        <taxon>Muridae</taxon>
        <taxon>Murinae</taxon>
        <taxon>Mus</taxon>
        <taxon>Mus</taxon>
    </lineage>
</organism>
<sequence>MSRIVKKGIVKIDQEQDEETFRENLAVQRNASAFFEKYDRTEVQELLTTTLVSWLAAKDDARSQLETPCGLMSQMNNAGFSTAILLTPVDPTALLDYREVHQILRELAIGIYCLNQIPSISLEANFDQSSSCQLPPAYYDTRVGQILIQIDYMLKALWHGIYMPKEKRARFSELWRTIMDIDLDGKPQTTKNVFSEFSSAGLVDITNDPDFNGIYDEDMNEDPTYEPNSPEEKAVFMKYAESIMMKLTFSTVQIQQHENIFIFETAYWLSNAIKYNQDYLDICTYQRLQKRLYLQKKVIQKHFEKKKEIRRGMGYLKLICFLIPFLLSLKRKMKVPYLNSLLPPFSDDKVKTERELPPFIYGRDFKCQNFDYKQHQYFHVHGGIEFDISTHPVESALDEFKKNVEKIWECASSASAEDAGYKEVYPIPVMELNGKSYYVIHFELEIFYQQLYKTQWWVAINETVNNLKVKRLPLTEDQLHEQFKKKFGLKKAMKCKSIPFGVKSAVERGLSAVFYTFSRKTSSSTINVSDEAGYAIFHHAALHNRVSVICQLWSANFNVNQRRFIMFSQADSSKVDMKKERNGPTPLHLAAQACSLEATICLLCFKADYTLTEKRGWMPIHFAAFYDNICILIALCRKDPSLLEAEATAENQCTPLLLAATSGALDTIQYLFSLGANWRKTDTKGNNIIHLSVLAFHTEVLKYIIELNIPELPVWETLVEMLQCESSKRRMMAVMSLEVICLANDRYWQCILDAGTIPALVNLLKSPQIKLQYKTVGLLSNISTHVSIVHAIVEAGGIPAVINLLTSDEPELHSRCAIILYDVAKCENKDVIAKYSGIPALINLLSLNKESVLVNVMNCIRVLCMGNESNQQSMKDNNGIQYLIQFLSSDSDVLKALSSATIAEVARDNKEVQDAIAKEGAIPPLVTLFKGKQLSVQVKGAMAVESLANCNPLIQKEFLERELTKDLLKLLQAFQIDVKEQGAIALWALAGQTLKQQKYMAEQIGYNLIISMLLSPSAKMQYVGGEAVIALSKDSRMHQNQICEGKGIAPLVRLLRINKIPEGTLLSVIRAVGSICIGVAHTSNPMSQQFVVEENALPVLIQLLRNHPSINIRVEVAFSLACIVLGNNSLKKELQNDEGFEYSDVLYLLHSKDKEVCLKAGYALTLFAFNDRFQQHLILETGLITVSIFEPFLQSSVETERAMAAFQIIILAKAIIDVEHVTLYGRGIQILADSLNSVHAPTIALTGNIIASLAHSRAGIPEAFVSLGTVQRLCYHLYARSEEVRTACSCALGYLTYNAHAFRLLLTECRNKPNQFLRITNNISKDAKINPAFLKEFQLQQRMGLPSLSLERNGGPPVIPVFKKGKEHRQKTRPKIQPRDSLTLLPPVTNVKELFRTTHKANISHNTFSFPSGVSSDIINVSRPRIAFLNKLGKDEQKANPDPPAFLNKLGKDEQNANPDPAESQ</sequence>
<comment type="subcellular location">
    <subcellularLocation>
        <location evidence="3">Membrane</location>
        <topology evidence="3">Single-pass membrane protein</topology>
    </subcellularLocation>
</comment>